<feature type="chain" id="PRO_1000088299" description="Demethylmenaquinone methyltransferase">
    <location>
        <begin position="1"/>
        <end position="241"/>
    </location>
</feature>
<feature type="binding site" evidence="1">
    <location>
        <position position="60"/>
    </location>
    <ligand>
        <name>S-adenosyl-L-methionine</name>
        <dbReference type="ChEBI" id="CHEBI:59789"/>
    </ligand>
</feature>
<feature type="binding site" evidence="1">
    <location>
        <position position="81"/>
    </location>
    <ligand>
        <name>S-adenosyl-L-methionine</name>
        <dbReference type="ChEBI" id="CHEBI:59789"/>
    </ligand>
</feature>
<feature type="binding site" evidence="1">
    <location>
        <begin position="106"/>
        <end position="107"/>
    </location>
    <ligand>
        <name>S-adenosyl-L-methionine</name>
        <dbReference type="ChEBI" id="CHEBI:59789"/>
    </ligand>
</feature>
<name>MENG_STAA2</name>
<accession>A6U1T9</accession>
<sequence length="241" mass="27423">MADNKANKEQVHRVFQNISKKYDRLNNIISFEQHKVWRKRVMKDMGVRKGTKALDVCCGTGDWTIALSKAVGPTGEVTGIDFSENMLEVGKEKTASMENVKLVHGDAMELPFEDNSFDYVTIGFGLRNVPDYLVALKEMNRVLKPGGMVVCLETSQPTLPVFKQMYALYFKFVMPIFGKLFAKSKEEYEWLQQSTFNFPGKEELKRMFEEAGFINVRVRSFTGGVAAMHLGYKEKDNTKGD</sequence>
<dbReference type="EC" id="2.1.1.163" evidence="1"/>
<dbReference type="EMBL" id="CP000736">
    <property type="protein sequence ID" value="ABR52407.1"/>
    <property type="molecule type" value="Genomic_DNA"/>
</dbReference>
<dbReference type="SMR" id="A6U1T9"/>
<dbReference type="KEGG" id="sah:SaurJH1_1558"/>
<dbReference type="HOGENOM" id="CLU_037990_0_0_9"/>
<dbReference type="UniPathway" id="UPA00079">
    <property type="reaction ID" value="UER00169"/>
</dbReference>
<dbReference type="GO" id="GO:0043770">
    <property type="term" value="F:demethylmenaquinone methyltransferase activity"/>
    <property type="evidence" value="ECO:0007669"/>
    <property type="project" value="UniProtKB-UniRule"/>
</dbReference>
<dbReference type="GO" id="GO:0009234">
    <property type="term" value="P:menaquinone biosynthetic process"/>
    <property type="evidence" value="ECO:0007669"/>
    <property type="project" value="UniProtKB-UniRule"/>
</dbReference>
<dbReference type="GO" id="GO:0032259">
    <property type="term" value="P:methylation"/>
    <property type="evidence" value="ECO:0007669"/>
    <property type="project" value="UniProtKB-KW"/>
</dbReference>
<dbReference type="CDD" id="cd02440">
    <property type="entry name" value="AdoMet_MTases"/>
    <property type="match status" value="1"/>
</dbReference>
<dbReference type="FunFam" id="3.40.50.150:FF:000086">
    <property type="entry name" value="Demethylmenaquinone methyltransferase"/>
    <property type="match status" value="1"/>
</dbReference>
<dbReference type="Gene3D" id="3.40.50.150">
    <property type="entry name" value="Vaccinia Virus protein VP39"/>
    <property type="match status" value="1"/>
</dbReference>
<dbReference type="HAMAP" id="MF_01813">
    <property type="entry name" value="MenG_UbiE_methyltr"/>
    <property type="match status" value="1"/>
</dbReference>
<dbReference type="InterPro" id="IPR029063">
    <property type="entry name" value="SAM-dependent_MTases_sf"/>
</dbReference>
<dbReference type="InterPro" id="IPR004033">
    <property type="entry name" value="UbiE/COQ5_MeTrFase"/>
</dbReference>
<dbReference type="InterPro" id="IPR023576">
    <property type="entry name" value="UbiE/COQ5_MeTrFase_CS"/>
</dbReference>
<dbReference type="NCBIfam" id="TIGR01934">
    <property type="entry name" value="MenG_MenH_UbiE"/>
    <property type="match status" value="1"/>
</dbReference>
<dbReference type="NCBIfam" id="NF001243">
    <property type="entry name" value="PRK00216.1-4"/>
    <property type="match status" value="1"/>
</dbReference>
<dbReference type="NCBIfam" id="NF001244">
    <property type="entry name" value="PRK00216.1-5"/>
    <property type="match status" value="1"/>
</dbReference>
<dbReference type="PANTHER" id="PTHR43591:SF24">
    <property type="entry name" value="2-METHOXY-6-POLYPRENYL-1,4-BENZOQUINOL METHYLASE, MITOCHONDRIAL"/>
    <property type="match status" value="1"/>
</dbReference>
<dbReference type="PANTHER" id="PTHR43591">
    <property type="entry name" value="METHYLTRANSFERASE"/>
    <property type="match status" value="1"/>
</dbReference>
<dbReference type="Pfam" id="PF01209">
    <property type="entry name" value="Ubie_methyltran"/>
    <property type="match status" value="1"/>
</dbReference>
<dbReference type="SUPFAM" id="SSF53335">
    <property type="entry name" value="S-adenosyl-L-methionine-dependent methyltransferases"/>
    <property type="match status" value="1"/>
</dbReference>
<dbReference type="PROSITE" id="PS51608">
    <property type="entry name" value="SAM_MT_UBIE"/>
    <property type="match status" value="1"/>
</dbReference>
<dbReference type="PROSITE" id="PS01183">
    <property type="entry name" value="UBIE_1"/>
    <property type="match status" value="1"/>
</dbReference>
<dbReference type="PROSITE" id="PS01184">
    <property type="entry name" value="UBIE_2"/>
    <property type="match status" value="1"/>
</dbReference>
<organism>
    <name type="scientific">Staphylococcus aureus (strain JH1)</name>
    <dbReference type="NCBI Taxonomy" id="359787"/>
    <lineage>
        <taxon>Bacteria</taxon>
        <taxon>Bacillati</taxon>
        <taxon>Bacillota</taxon>
        <taxon>Bacilli</taxon>
        <taxon>Bacillales</taxon>
        <taxon>Staphylococcaceae</taxon>
        <taxon>Staphylococcus</taxon>
    </lineage>
</organism>
<proteinExistence type="inferred from homology"/>
<gene>
    <name evidence="1" type="primary">menG</name>
    <name type="ordered locus">SaurJH1_1558</name>
</gene>
<evidence type="ECO:0000255" key="1">
    <source>
        <dbReference type="HAMAP-Rule" id="MF_01813"/>
    </source>
</evidence>
<protein>
    <recommendedName>
        <fullName evidence="1">Demethylmenaquinone methyltransferase</fullName>
        <ecNumber evidence="1">2.1.1.163</ecNumber>
    </recommendedName>
</protein>
<comment type="function">
    <text evidence="1">Methyltransferase required for the conversion of demethylmenaquinol (DMKH2) to menaquinol (MKH2).</text>
</comment>
<comment type="catalytic activity">
    <reaction evidence="1">
        <text>a 2-demethylmenaquinol + S-adenosyl-L-methionine = a menaquinol + S-adenosyl-L-homocysteine + H(+)</text>
        <dbReference type="Rhea" id="RHEA:42640"/>
        <dbReference type="Rhea" id="RHEA-COMP:9539"/>
        <dbReference type="Rhea" id="RHEA-COMP:9563"/>
        <dbReference type="ChEBI" id="CHEBI:15378"/>
        <dbReference type="ChEBI" id="CHEBI:18151"/>
        <dbReference type="ChEBI" id="CHEBI:55437"/>
        <dbReference type="ChEBI" id="CHEBI:57856"/>
        <dbReference type="ChEBI" id="CHEBI:59789"/>
        <dbReference type="EC" id="2.1.1.163"/>
    </reaction>
</comment>
<comment type="pathway">
    <text evidence="1">Quinol/quinone metabolism; menaquinone biosynthesis; menaquinol from 1,4-dihydroxy-2-naphthoate: step 2/2.</text>
</comment>
<comment type="similarity">
    <text evidence="1">Belongs to the class I-like SAM-binding methyltransferase superfamily. MenG/UbiE family.</text>
</comment>
<reference key="1">
    <citation type="submission" date="2007-06" db="EMBL/GenBank/DDBJ databases">
        <title>Complete sequence of chromosome of Staphylococcus aureus subsp. aureus JH1.</title>
        <authorList>
            <consortium name="US DOE Joint Genome Institute"/>
            <person name="Copeland A."/>
            <person name="Lucas S."/>
            <person name="Lapidus A."/>
            <person name="Barry K."/>
            <person name="Detter J.C."/>
            <person name="Glavina del Rio T."/>
            <person name="Hammon N."/>
            <person name="Israni S."/>
            <person name="Dalin E."/>
            <person name="Tice H."/>
            <person name="Pitluck S."/>
            <person name="Chain P."/>
            <person name="Malfatti S."/>
            <person name="Shin M."/>
            <person name="Vergez L."/>
            <person name="Schmutz J."/>
            <person name="Larimer F."/>
            <person name="Land M."/>
            <person name="Hauser L."/>
            <person name="Kyrpides N."/>
            <person name="Ivanova N."/>
            <person name="Tomasz A."/>
            <person name="Richardson P."/>
        </authorList>
    </citation>
    <scope>NUCLEOTIDE SEQUENCE [LARGE SCALE GENOMIC DNA]</scope>
    <source>
        <strain>JH1</strain>
    </source>
</reference>
<keyword id="KW-0474">Menaquinone biosynthesis</keyword>
<keyword id="KW-0489">Methyltransferase</keyword>
<keyword id="KW-0949">S-adenosyl-L-methionine</keyword>
<keyword id="KW-0808">Transferase</keyword>